<dbReference type="EMBL" id="DP000028">
    <property type="protein sequence ID" value="ABC87471.1"/>
    <property type="molecule type" value="Genomic_DNA"/>
</dbReference>
<dbReference type="RefSeq" id="XP_032954696.1">
    <property type="nucleotide sequence ID" value="XM_033098805.1"/>
</dbReference>
<dbReference type="FunCoup" id="Q2IBC1">
    <property type="interactions" value="676"/>
</dbReference>
<dbReference type="Ensembl" id="ENSRFET00010031448.1">
    <property type="protein sequence ID" value="ENSRFEP00010028971.1"/>
    <property type="gene ID" value="ENSRFEG00010019224.1"/>
</dbReference>
<dbReference type="GeneID" id="117018071"/>
<dbReference type="GeneTree" id="ENSGT00950000183006"/>
<dbReference type="InParanoid" id="Q2IBC1"/>
<dbReference type="OMA" id="MSGSKYV"/>
<dbReference type="OrthoDB" id="5917823at2759"/>
<dbReference type="Proteomes" id="UP000472240">
    <property type="component" value="Chromosome 26"/>
</dbReference>
<dbReference type="GO" id="GO:0002080">
    <property type="term" value="C:acrosomal membrane"/>
    <property type="evidence" value="ECO:0007669"/>
    <property type="project" value="Ensembl"/>
</dbReference>
<dbReference type="GO" id="GO:0005901">
    <property type="term" value="C:caveola"/>
    <property type="evidence" value="ECO:0000250"/>
    <property type="project" value="UniProtKB"/>
</dbReference>
<dbReference type="GO" id="GO:0002095">
    <property type="term" value="C:caveolar macromolecular signaling complex"/>
    <property type="evidence" value="ECO:0007669"/>
    <property type="project" value="Ensembl"/>
</dbReference>
<dbReference type="GO" id="GO:0005938">
    <property type="term" value="C:cell cortex"/>
    <property type="evidence" value="ECO:0007669"/>
    <property type="project" value="Ensembl"/>
</dbReference>
<dbReference type="GO" id="GO:0005929">
    <property type="term" value="C:cilium"/>
    <property type="evidence" value="ECO:0007669"/>
    <property type="project" value="Ensembl"/>
</dbReference>
<dbReference type="GO" id="GO:0005783">
    <property type="term" value="C:endoplasmic reticulum"/>
    <property type="evidence" value="ECO:0007669"/>
    <property type="project" value="Ensembl"/>
</dbReference>
<dbReference type="GO" id="GO:0005768">
    <property type="term" value="C:endosome"/>
    <property type="evidence" value="ECO:0000250"/>
    <property type="project" value="UniProtKB"/>
</dbReference>
<dbReference type="GO" id="GO:0005925">
    <property type="term" value="C:focal adhesion"/>
    <property type="evidence" value="ECO:0007669"/>
    <property type="project" value="Ensembl"/>
</dbReference>
<dbReference type="GO" id="GO:0000139">
    <property type="term" value="C:Golgi membrane"/>
    <property type="evidence" value="ECO:0007669"/>
    <property type="project" value="UniProtKB-SubCell"/>
</dbReference>
<dbReference type="GO" id="GO:0045121">
    <property type="term" value="C:membrane raft"/>
    <property type="evidence" value="ECO:0000250"/>
    <property type="project" value="UniProtKB"/>
</dbReference>
<dbReference type="GO" id="GO:0048471">
    <property type="term" value="C:perinuclear region of cytoplasm"/>
    <property type="evidence" value="ECO:0007669"/>
    <property type="project" value="Ensembl"/>
</dbReference>
<dbReference type="GO" id="GO:0042383">
    <property type="term" value="C:sarcolemma"/>
    <property type="evidence" value="ECO:0007669"/>
    <property type="project" value="TreeGrafter"/>
</dbReference>
<dbReference type="GO" id="GO:0051117">
    <property type="term" value="F:ATPase binding"/>
    <property type="evidence" value="ECO:0007669"/>
    <property type="project" value="Ensembl"/>
</dbReference>
<dbReference type="GO" id="GO:0042802">
    <property type="term" value="F:identical protein binding"/>
    <property type="evidence" value="ECO:0007669"/>
    <property type="project" value="Ensembl"/>
</dbReference>
<dbReference type="GO" id="GO:0070320">
    <property type="term" value="F:inward rectifier potassium channel inhibitor activity"/>
    <property type="evidence" value="ECO:0007669"/>
    <property type="project" value="Ensembl"/>
</dbReference>
<dbReference type="GO" id="GO:0050998">
    <property type="term" value="F:nitric-oxide synthase binding"/>
    <property type="evidence" value="ECO:0007669"/>
    <property type="project" value="Ensembl"/>
</dbReference>
<dbReference type="GO" id="GO:0008142">
    <property type="term" value="F:oxysterol binding"/>
    <property type="evidence" value="ECO:0000250"/>
    <property type="project" value="UniProtKB"/>
</dbReference>
<dbReference type="GO" id="GO:0016504">
    <property type="term" value="F:peptidase activator activity"/>
    <property type="evidence" value="ECO:0007669"/>
    <property type="project" value="Ensembl"/>
</dbReference>
<dbReference type="GO" id="GO:0046982">
    <property type="term" value="F:protein heterodimerization activity"/>
    <property type="evidence" value="ECO:0007669"/>
    <property type="project" value="Ensembl"/>
</dbReference>
<dbReference type="GO" id="GO:0019901">
    <property type="term" value="F:protein kinase binding"/>
    <property type="evidence" value="ECO:0007669"/>
    <property type="project" value="Ensembl"/>
</dbReference>
<dbReference type="GO" id="GO:0030292">
    <property type="term" value="F:protein tyrosine kinase inhibitor activity"/>
    <property type="evidence" value="ECO:0007669"/>
    <property type="project" value="Ensembl"/>
</dbReference>
<dbReference type="GO" id="GO:0044877">
    <property type="term" value="F:protein-containing complex binding"/>
    <property type="evidence" value="ECO:0007669"/>
    <property type="project" value="Ensembl"/>
</dbReference>
<dbReference type="GO" id="GO:0030674">
    <property type="term" value="F:protein-macromolecule adaptor activity"/>
    <property type="evidence" value="ECO:0007669"/>
    <property type="project" value="Ensembl"/>
</dbReference>
<dbReference type="GO" id="GO:0005102">
    <property type="term" value="F:signaling receptor binding"/>
    <property type="evidence" value="ECO:0007669"/>
    <property type="project" value="Ensembl"/>
</dbReference>
<dbReference type="GO" id="GO:0031267">
    <property type="term" value="F:small GTPase binding"/>
    <property type="evidence" value="ECO:0007669"/>
    <property type="project" value="Ensembl"/>
</dbReference>
<dbReference type="GO" id="GO:0044325">
    <property type="term" value="F:transmembrane transporter binding"/>
    <property type="evidence" value="ECO:0007669"/>
    <property type="project" value="Ensembl"/>
</dbReference>
<dbReference type="GO" id="GO:0001525">
    <property type="term" value="P:angiogenesis"/>
    <property type="evidence" value="ECO:0007669"/>
    <property type="project" value="Ensembl"/>
</dbReference>
<dbReference type="GO" id="GO:0038166">
    <property type="term" value="P:angiotensin-activated signaling pathway"/>
    <property type="evidence" value="ECO:0007669"/>
    <property type="project" value="Ensembl"/>
</dbReference>
<dbReference type="GO" id="GO:0097190">
    <property type="term" value="P:apoptotic signaling pathway"/>
    <property type="evidence" value="ECO:0007669"/>
    <property type="project" value="Ensembl"/>
</dbReference>
<dbReference type="GO" id="GO:0071711">
    <property type="term" value="P:basement membrane organization"/>
    <property type="evidence" value="ECO:0007669"/>
    <property type="project" value="Ensembl"/>
</dbReference>
<dbReference type="GO" id="GO:0006816">
    <property type="term" value="P:calcium ion transport"/>
    <property type="evidence" value="ECO:0007669"/>
    <property type="project" value="Ensembl"/>
</dbReference>
<dbReference type="GO" id="GO:0060070">
    <property type="term" value="P:canonical Wnt signaling pathway"/>
    <property type="evidence" value="ECO:0007669"/>
    <property type="project" value="Ensembl"/>
</dbReference>
<dbReference type="GO" id="GO:0070836">
    <property type="term" value="P:caveola assembly"/>
    <property type="evidence" value="ECO:0007669"/>
    <property type="project" value="Ensembl"/>
</dbReference>
<dbReference type="GO" id="GO:0072584">
    <property type="term" value="P:caveolin-mediated endocytosis"/>
    <property type="evidence" value="ECO:0007669"/>
    <property type="project" value="Ensembl"/>
</dbReference>
<dbReference type="GO" id="GO:0071360">
    <property type="term" value="P:cellular response to exogenous dsRNA"/>
    <property type="evidence" value="ECO:0007669"/>
    <property type="project" value="Ensembl"/>
</dbReference>
<dbReference type="GO" id="GO:0071455">
    <property type="term" value="P:cellular response to hyperoxia"/>
    <property type="evidence" value="ECO:0007669"/>
    <property type="project" value="Ensembl"/>
</dbReference>
<dbReference type="GO" id="GO:0071218">
    <property type="term" value="P:cellular response to misfolded protein"/>
    <property type="evidence" value="ECO:0007669"/>
    <property type="project" value="Ensembl"/>
</dbReference>
<dbReference type="GO" id="GO:0071560">
    <property type="term" value="P:cellular response to transforming growth factor beta stimulus"/>
    <property type="evidence" value="ECO:0007669"/>
    <property type="project" value="Ensembl"/>
</dbReference>
<dbReference type="GO" id="GO:0042632">
    <property type="term" value="P:cholesterol homeostasis"/>
    <property type="evidence" value="ECO:0007669"/>
    <property type="project" value="Ensembl"/>
</dbReference>
<dbReference type="GO" id="GO:0019221">
    <property type="term" value="P:cytokine-mediated signaling pathway"/>
    <property type="evidence" value="ECO:0007669"/>
    <property type="project" value="Ensembl"/>
</dbReference>
<dbReference type="GO" id="GO:0001935">
    <property type="term" value="P:endothelial cell proliferation"/>
    <property type="evidence" value="ECO:0007669"/>
    <property type="project" value="Ensembl"/>
</dbReference>
<dbReference type="GO" id="GO:0051649">
    <property type="term" value="P:establishment of localization in cell"/>
    <property type="evidence" value="ECO:0007669"/>
    <property type="project" value="Ensembl"/>
</dbReference>
<dbReference type="GO" id="GO:0048144">
    <property type="term" value="P:fibroblast proliferation"/>
    <property type="evidence" value="ECO:0007669"/>
    <property type="project" value="Ensembl"/>
</dbReference>
<dbReference type="GO" id="GO:0002067">
    <property type="term" value="P:glandular epithelial cell differentiation"/>
    <property type="evidence" value="ECO:0007669"/>
    <property type="project" value="Ensembl"/>
</dbReference>
<dbReference type="GO" id="GO:0038016">
    <property type="term" value="P:insulin receptor internalization"/>
    <property type="evidence" value="ECO:0007669"/>
    <property type="project" value="Ensembl"/>
</dbReference>
<dbReference type="GO" id="GO:0033484">
    <property type="term" value="P:intracellular nitric oxide homeostasis"/>
    <property type="evidence" value="ECO:0007669"/>
    <property type="project" value="Ensembl"/>
</dbReference>
<dbReference type="GO" id="GO:0007595">
    <property type="term" value="P:lactation"/>
    <property type="evidence" value="ECO:0007669"/>
    <property type="project" value="Ensembl"/>
</dbReference>
<dbReference type="GO" id="GO:0019915">
    <property type="term" value="P:lipid storage"/>
    <property type="evidence" value="ECO:0007669"/>
    <property type="project" value="Ensembl"/>
</dbReference>
<dbReference type="GO" id="GO:0060056">
    <property type="term" value="P:mammary gland involution"/>
    <property type="evidence" value="ECO:0007669"/>
    <property type="project" value="Ensembl"/>
</dbReference>
<dbReference type="GO" id="GO:0000165">
    <property type="term" value="P:MAPK cascade"/>
    <property type="evidence" value="ECO:0007669"/>
    <property type="project" value="Ensembl"/>
</dbReference>
<dbReference type="GO" id="GO:0051899">
    <property type="term" value="P:membrane depolarization"/>
    <property type="evidence" value="ECO:0007669"/>
    <property type="project" value="Ensembl"/>
</dbReference>
<dbReference type="GO" id="GO:0046716">
    <property type="term" value="P:muscle cell cellular homeostasis"/>
    <property type="evidence" value="ECO:0007669"/>
    <property type="project" value="Ensembl"/>
</dbReference>
<dbReference type="GO" id="GO:2000811">
    <property type="term" value="P:negative regulation of anoikis"/>
    <property type="evidence" value="ECO:0007669"/>
    <property type="project" value="Ensembl"/>
</dbReference>
<dbReference type="GO" id="GO:0090090">
    <property type="term" value="P:negative regulation of canonical Wnt signaling pathway"/>
    <property type="evidence" value="ECO:0007669"/>
    <property type="project" value="Ensembl"/>
</dbReference>
<dbReference type="GO" id="GO:0001960">
    <property type="term" value="P:negative regulation of cytokine-mediated signaling pathway"/>
    <property type="evidence" value="ECO:0007669"/>
    <property type="project" value="Ensembl"/>
</dbReference>
<dbReference type="GO" id="GO:0001937">
    <property type="term" value="P:negative regulation of endothelial cell proliferation"/>
    <property type="evidence" value="ECO:0007669"/>
    <property type="project" value="Ensembl"/>
</dbReference>
<dbReference type="GO" id="GO:0030857">
    <property type="term" value="P:negative regulation of epithelial cell differentiation"/>
    <property type="evidence" value="ECO:0007669"/>
    <property type="project" value="Ensembl"/>
</dbReference>
<dbReference type="GO" id="GO:0048147">
    <property type="term" value="P:negative regulation of fibroblast proliferation"/>
    <property type="evidence" value="ECO:0007669"/>
    <property type="project" value="Ensembl"/>
</dbReference>
<dbReference type="GO" id="GO:0043409">
    <property type="term" value="P:negative regulation of MAPK cascade"/>
    <property type="evidence" value="ECO:0007669"/>
    <property type="project" value="Ensembl"/>
</dbReference>
<dbReference type="GO" id="GO:0060546">
    <property type="term" value="P:negative regulation of necroptotic process"/>
    <property type="evidence" value="ECO:0007669"/>
    <property type="project" value="Ensembl"/>
</dbReference>
<dbReference type="GO" id="GO:0045019">
    <property type="term" value="P:negative regulation of nitric oxide biosynthetic process"/>
    <property type="evidence" value="ECO:0007669"/>
    <property type="project" value="Ensembl"/>
</dbReference>
<dbReference type="GO" id="GO:0048550">
    <property type="term" value="P:negative regulation of pinocytosis"/>
    <property type="evidence" value="ECO:0007669"/>
    <property type="project" value="Ensembl"/>
</dbReference>
<dbReference type="GO" id="GO:1901380">
    <property type="term" value="P:negative regulation of potassium ion transmembrane transport"/>
    <property type="evidence" value="ECO:0007669"/>
    <property type="project" value="Ensembl"/>
</dbReference>
<dbReference type="GO" id="GO:0031397">
    <property type="term" value="P:negative regulation of protein ubiquitination"/>
    <property type="evidence" value="ECO:0007669"/>
    <property type="project" value="Ensembl"/>
</dbReference>
<dbReference type="GO" id="GO:0046426">
    <property type="term" value="P:negative regulation of receptor signaling pathway via JAK-STAT"/>
    <property type="evidence" value="ECO:0007669"/>
    <property type="project" value="Ensembl"/>
</dbReference>
<dbReference type="GO" id="GO:0000122">
    <property type="term" value="P:negative regulation of transcription by RNA polymerase II"/>
    <property type="evidence" value="ECO:0007669"/>
    <property type="project" value="Ensembl"/>
</dbReference>
<dbReference type="GO" id="GO:0006809">
    <property type="term" value="P:nitric oxide biosynthetic process"/>
    <property type="evidence" value="ECO:0007669"/>
    <property type="project" value="Ensembl"/>
</dbReference>
<dbReference type="GO" id="GO:0010524">
    <property type="term" value="P:positive regulation of calcium ion transport into cytosol"/>
    <property type="evidence" value="ECO:0007669"/>
    <property type="project" value="Ensembl"/>
</dbReference>
<dbReference type="GO" id="GO:0043123">
    <property type="term" value="P:positive regulation of canonical NF-kappaB signal transduction"/>
    <property type="evidence" value="ECO:0007669"/>
    <property type="project" value="Ensembl"/>
</dbReference>
<dbReference type="GO" id="GO:0060355">
    <property type="term" value="P:positive regulation of cell adhesion molecule production"/>
    <property type="evidence" value="ECO:0007669"/>
    <property type="project" value="Ensembl"/>
</dbReference>
<dbReference type="GO" id="GO:0030335">
    <property type="term" value="P:positive regulation of cell migration"/>
    <property type="evidence" value="ECO:0007669"/>
    <property type="project" value="Ensembl"/>
</dbReference>
<dbReference type="GO" id="GO:0010875">
    <property type="term" value="P:positive regulation of cholesterol efflux"/>
    <property type="evidence" value="ECO:0007669"/>
    <property type="project" value="Ensembl"/>
</dbReference>
<dbReference type="GO" id="GO:0120162">
    <property type="term" value="P:positive regulation of cold-induced thermogenesis"/>
    <property type="evidence" value="ECO:0007669"/>
    <property type="project" value="Ensembl"/>
</dbReference>
<dbReference type="GO" id="GO:1904294">
    <property type="term" value="P:positive regulation of ERAD pathway"/>
    <property type="evidence" value="ECO:0007669"/>
    <property type="project" value="Ensembl"/>
</dbReference>
<dbReference type="GO" id="GO:2001238">
    <property type="term" value="P:positive regulation of extrinsic apoptotic signaling pathway"/>
    <property type="evidence" value="ECO:0007669"/>
    <property type="project" value="Ensembl"/>
</dbReference>
<dbReference type="GO" id="GO:1903598">
    <property type="term" value="P:positive regulation of gap junction assembly"/>
    <property type="evidence" value="ECO:0007669"/>
    <property type="project" value="Ensembl"/>
</dbReference>
<dbReference type="GO" id="GO:0010628">
    <property type="term" value="P:positive regulation of gene expression"/>
    <property type="evidence" value="ECO:0007669"/>
    <property type="project" value="Ensembl"/>
</dbReference>
<dbReference type="GO" id="GO:2001244">
    <property type="term" value="P:positive regulation of intrinsic apoptotic signaling pathway"/>
    <property type="evidence" value="ECO:0007669"/>
    <property type="project" value="Ensembl"/>
</dbReference>
<dbReference type="GO" id="GO:0031398">
    <property type="term" value="P:positive regulation of protein ubiquitination"/>
    <property type="evidence" value="ECO:0007669"/>
    <property type="project" value="Ensembl"/>
</dbReference>
<dbReference type="GO" id="GO:0034141">
    <property type="term" value="P:positive regulation of toll-like receptor 3 signaling pathway"/>
    <property type="evidence" value="ECO:0007669"/>
    <property type="project" value="Ensembl"/>
</dbReference>
<dbReference type="GO" id="GO:0045907">
    <property type="term" value="P:positive regulation of vasoconstriction"/>
    <property type="evidence" value="ECO:0007669"/>
    <property type="project" value="Ensembl"/>
</dbReference>
<dbReference type="GO" id="GO:0010608">
    <property type="term" value="P:post-transcriptional regulation of gene expression"/>
    <property type="evidence" value="ECO:0007669"/>
    <property type="project" value="Ensembl"/>
</dbReference>
<dbReference type="GO" id="GO:0015031">
    <property type="term" value="P:protein transport"/>
    <property type="evidence" value="ECO:0007669"/>
    <property type="project" value="Ensembl"/>
</dbReference>
<dbReference type="GO" id="GO:0031623">
    <property type="term" value="P:receptor internalization"/>
    <property type="evidence" value="ECO:0000250"/>
    <property type="project" value="UniProtKB"/>
</dbReference>
<dbReference type="GO" id="GO:0019065">
    <property type="term" value="P:receptor-mediated endocytosis of virus by host cell"/>
    <property type="evidence" value="ECO:0007669"/>
    <property type="project" value="Ensembl"/>
</dbReference>
<dbReference type="GO" id="GO:0030193">
    <property type="term" value="P:regulation of blood coagulation"/>
    <property type="evidence" value="ECO:0007669"/>
    <property type="project" value="Ensembl"/>
</dbReference>
<dbReference type="GO" id="GO:1901844">
    <property type="term" value="P:regulation of cell communication by electrical coupling involved in cardiac conduction"/>
    <property type="evidence" value="ECO:0007669"/>
    <property type="project" value="Ensembl"/>
</dbReference>
<dbReference type="GO" id="GO:0051480">
    <property type="term" value="P:regulation of cytosolic calcium ion concentration"/>
    <property type="evidence" value="ECO:0007669"/>
    <property type="project" value="Ensembl"/>
</dbReference>
<dbReference type="GO" id="GO:2000535">
    <property type="term" value="P:regulation of entry of bacterium into host cell"/>
    <property type="evidence" value="ECO:0007669"/>
    <property type="project" value="Ensembl"/>
</dbReference>
<dbReference type="GO" id="GO:0019217">
    <property type="term" value="P:regulation of fatty acid metabolic process"/>
    <property type="evidence" value="ECO:0007669"/>
    <property type="project" value="Ensembl"/>
</dbReference>
<dbReference type="GO" id="GO:0086091">
    <property type="term" value="P:regulation of heart rate by cardiac conduction"/>
    <property type="evidence" value="ECO:0007669"/>
    <property type="project" value="Ensembl"/>
</dbReference>
<dbReference type="GO" id="GO:0098903">
    <property type="term" value="P:regulation of membrane repolarization during action potential"/>
    <property type="evidence" value="ECO:0007669"/>
    <property type="project" value="Ensembl"/>
</dbReference>
<dbReference type="GO" id="GO:1900027">
    <property type="term" value="P:regulation of ruffle assembly"/>
    <property type="evidence" value="ECO:0007669"/>
    <property type="project" value="Ensembl"/>
</dbReference>
<dbReference type="GO" id="GO:0006940">
    <property type="term" value="P:regulation of smooth muscle contraction"/>
    <property type="evidence" value="ECO:0007669"/>
    <property type="project" value="Ensembl"/>
</dbReference>
<dbReference type="GO" id="GO:0003057">
    <property type="term" value="P:regulation of the force of heart contraction by chemical signal"/>
    <property type="evidence" value="ECO:0007669"/>
    <property type="project" value="Ensembl"/>
</dbReference>
<dbReference type="GO" id="GO:0098911">
    <property type="term" value="P:regulation of ventricular cardiac muscle cell action potential"/>
    <property type="evidence" value="ECO:0007669"/>
    <property type="project" value="Ensembl"/>
</dbReference>
<dbReference type="GO" id="GO:0009617">
    <property type="term" value="P:response to bacterium"/>
    <property type="evidence" value="ECO:0007669"/>
    <property type="project" value="Ensembl"/>
</dbReference>
<dbReference type="GO" id="GO:0051592">
    <property type="term" value="P:response to calcium ion"/>
    <property type="evidence" value="ECO:0007669"/>
    <property type="project" value="Ensembl"/>
</dbReference>
<dbReference type="GO" id="GO:0043627">
    <property type="term" value="P:response to estrogen"/>
    <property type="evidence" value="ECO:0007669"/>
    <property type="project" value="Ensembl"/>
</dbReference>
<dbReference type="GO" id="GO:0001666">
    <property type="term" value="P:response to hypoxia"/>
    <property type="evidence" value="ECO:0007669"/>
    <property type="project" value="Ensembl"/>
</dbReference>
<dbReference type="GO" id="GO:0002931">
    <property type="term" value="P:response to ischemia"/>
    <property type="evidence" value="ECO:0007669"/>
    <property type="project" value="Ensembl"/>
</dbReference>
<dbReference type="GO" id="GO:0032570">
    <property type="term" value="P:response to progesterone"/>
    <property type="evidence" value="ECO:0007669"/>
    <property type="project" value="Ensembl"/>
</dbReference>
<dbReference type="GO" id="GO:0007519">
    <property type="term" value="P:skeletal muscle tissue development"/>
    <property type="evidence" value="ECO:0007669"/>
    <property type="project" value="Ensembl"/>
</dbReference>
<dbReference type="GO" id="GO:0031295">
    <property type="term" value="P:T cell costimulation"/>
    <property type="evidence" value="ECO:0000250"/>
    <property type="project" value="UniProtKB"/>
</dbReference>
<dbReference type="GO" id="GO:0006641">
    <property type="term" value="P:triglyceride metabolic process"/>
    <property type="evidence" value="ECO:0007669"/>
    <property type="project" value="Ensembl"/>
</dbReference>
<dbReference type="GO" id="GO:0001570">
    <property type="term" value="P:vasculogenesis"/>
    <property type="evidence" value="ECO:0007669"/>
    <property type="project" value="Ensembl"/>
</dbReference>
<dbReference type="GO" id="GO:0042310">
    <property type="term" value="P:vasoconstriction"/>
    <property type="evidence" value="ECO:0007669"/>
    <property type="project" value="Ensembl"/>
</dbReference>
<dbReference type="InterPro" id="IPR001612">
    <property type="entry name" value="Caveolin"/>
</dbReference>
<dbReference type="InterPro" id="IPR018361">
    <property type="entry name" value="Caveolin_CS"/>
</dbReference>
<dbReference type="PANTHER" id="PTHR10844">
    <property type="entry name" value="CAVEOLIN"/>
    <property type="match status" value="1"/>
</dbReference>
<dbReference type="PANTHER" id="PTHR10844:SF18">
    <property type="entry name" value="CAVEOLIN-1"/>
    <property type="match status" value="1"/>
</dbReference>
<dbReference type="Pfam" id="PF01146">
    <property type="entry name" value="Caveolin"/>
    <property type="match status" value="1"/>
</dbReference>
<dbReference type="PROSITE" id="PS01210">
    <property type="entry name" value="CAVEOLIN"/>
    <property type="match status" value="1"/>
</dbReference>
<organism>
    <name type="scientific">Rhinolophus ferrumequinum</name>
    <name type="common">Greater horseshoe bat</name>
    <dbReference type="NCBI Taxonomy" id="59479"/>
    <lineage>
        <taxon>Eukaryota</taxon>
        <taxon>Metazoa</taxon>
        <taxon>Chordata</taxon>
        <taxon>Craniata</taxon>
        <taxon>Vertebrata</taxon>
        <taxon>Euteleostomi</taxon>
        <taxon>Mammalia</taxon>
        <taxon>Eutheria</taxon>
        <taxon>Laurasiatheria</taxon>
        <taxon>Chiroptera</taxon>
        <taxon>Yinpterochiroptera</taxon>
        <taxon>Rhinolophoidea</taxon>
        <taxon>Rhinolophidae</taxon>
        <taxon>Rhinolophinae</taxon>
        <taxon>Rhinolophus</taxon>
    </lineage>
</organism>
<reference key="1">
    <citation type="submission" date="2006-01" db="EMBL/GenBank/DDBJ databases">
        <title>NISC comparative sequencing initiative.</title>
        <authorList>
            <person name="Antonellis A."/>
            <person name="Ayele K."/>
            <person name="Benjamin B."/>
            <person name="Blakesley R.W."/>
            <person name="Boakye A."/>
            <person name="Bouffard G.G."/>
            <person name="Brinkley C."/>
            <person name="Brooks S."/>
            <person name="Chu G."/>
            <person name="Coleman H."/>
            <person name="Engle J."/>
            <person name="Gestole M."/>
            <person name="Greene A."/>
            <person name="Guan X."/>
            <person name="Gupta J."/>
            <person name="Haghighi P."/>
            <person name="Han J."/>
            <person name="Hansen N."/>
            <person name="Ho S.-L."/>
            <person name="Hu P."/>
            <person name="Hunter G."/>
            <person name="Hurle B."/>
            <person name="Idol J.R."/>
            <person name="Kwong P."/>
            <person name="Laric P."/>
            <person name="Larson S."/>
            <person name="Lee-Lin S.-Q."/>
            <person name="Legaspi R."/>
            <person name="Madden M."/>
            <person name="Maduro Q.L."/>
            <person name="Maduro V.B."/>
            <person name="Margulies E.H."/>
            <person name="Masiello C."/>
            <person name="Maskeri B."/>
            <person name="McDowell J."/>
            <person name="Mojidi H.A."/>
            <person name="Mullikin J.C."/>
            <person name="Oestreicher J.S."/>
            <person name="Park M."/>
            <person name="Portnoy M.E."/>
            <person name="Prasad A."/>
            <person name="Puri O."/>
            <person name="Reddix-Dugue N."/>
            <person name="Schandler K."/>
            <person name="Schueler M.G."/>
            <person name="Sison C."/>
            <person name="Stantripop S."/>
            <person name="Stephen E."/>
            <person name="Taye A."/>
            <person name="Thomas J.W."/>
            <person name="Thomas P.J."/>
            <person name="Tsipouri V."/>
            <person name="Ung L."/>
            <person name="Vogt J.L."/>
            <person name="Wetherby K.D."/>
            <person name="Young A."/>
            <person name="Green E.D."/>
        </authorList>
    </citation>
    <scope>NUCLEOTIDE SEQUENCE [LARGE SCALE GENOMIC DNA]</scope>
</reference>
<proteinExistence type="inferred from homology"/>
<sequence length="178" mass="20705">MSGGKYVDSEGHLYTVPIREQGNIYKPNNKTMADEMNEKQVYDAHTKEIDLVNRDPKHLNDDVVKIDFEDVIAEPEGTHSFDGIWKASFTTFTVTKYWFYRLLSAVFGIPMALIWGIYFAIVSFLHIWVVVPYIKSFLIEIQCISRVYSIYIHTFCDPLFEAFGKVFSNIRINTQKEI</sequence>
<protein>
    <recommendedName>
        <fullName>Caveolin-1</fullName>
    </recommendedName>
</protein>
<comment type="function">
    <text evidence="3 4">May act as a scaffolding protein within caveolar membranes. Forms a stable heterooligomeric complex with CAV2 that targets to lipid rafts and drives caveolae formation. Mediates the recruitment of CAVIN proteins (CAVIN1/2/3/4) to the caveolae (By similarity). Interacts directly with G-protein alpha subunits and can functionally regulate their activity (By similarity). Involved in the costimulatory signal essential for T-cell receptor (TCR)-mediated T-cell activation. Its binding to DPP4 induces T-cell proliferation and NF-kappa-B activation in a T-cell receptor/CD3-dependent manner (By similarity). Recruits CTNNB1 to caveolar membranes and may regulate CTNNB1-mediated signaling through the Wnt pathway (By similarity). Negatively regulates TGFB1-mediated activation of SMAD2/3 by mediating the internalization of TGFBR1 from membrane rafts leading to its subsequent degradation (By similarity). Binds 20(S)-hydroxycholesterol (20(S)-OHC) (By similarity).</text>
</comment>
<comment type="subunit">
    <text evidence="2 3 4 5">Homooligomer. Interacts (via the N-terminus) with DPP4; the interaction is direct. Forms a stable heterooligomeric complex with CAV2 that targets to lipid rafts and drives caveolae formation. Interacts with PACSIN2; this interaction induces membrane tubulation (By similarity). Interacts with BMX, BTK, CTNNB1, CDH1, GLIPR2, JUP, NOSTRIN, SNAP25 and STX1A. Interacts with SLC7A9. Interacts with TGFBR1. Interacts with CAVIN3 (via leucine-zipper domain) in a cholesterol-sensitive manner. Interacts with CAVIN1. Interacts with EHD2 in a cholesterol-dependent manner. Forms a ternary complex with UBXN6 and VCP; mediates CAV1 targeting to lysosomes for degradation. Interacts with ABCG1; this interaction regulates ABCG1-mediated cholesterol efflux (By similarity). Interacts with NEU3; this interaction enhances NEU3 sialidase activity within caveola. Interacts (via C-terminus) with SPRY1, SPRY2 (via C-terminus), SPRY3, and SPRY4 (By similarity).</text>
</comment>
<comment type="subcellular location">
    <subcellularLocation>
        <location evidence="1">Golgi apparatus membrane</location>
        <topology evidence="1">Peripheral membrane protein</topology>
    </subcellularLocation>
    <subcellularLocation>
        <location evidence="1">Cell membrane</location>
        <topology evidence="1">Peripheral membrane protein</topology>
    </subcellularLocation>
    <subcellularLocation>
        <location evidence="3">Membrane</location>
        <location evidence="3">Caveola</location>
        <topology evidence="1">Peripheral membrane protein</topology>
    </subcellularLocation>
    <subcellularLocation>
        <location evidence="4">Membrane raft</location>
    </subcellularLocation>
    <text evidence="1">Colocalized with DPP4 in membrane rafts. Potential hairpin-like structure in the membrane. Membrane protein of caveolae (By similarity).</text>
</comment>
<comment type="PTM">
    <text evidence="4">Phosphorylated at Tyr-14 by ABL1 in response to oxidative stress.</text>
</comment>
<comment type="PTM">
    <text evidence="4">Ubiquitinated. Undergo monoubiquitination and multi- and/or polyubiquitination. Monoubiquitination of N-terminal lysines promotes integration in a ternary complex with UBXN6 and VCP which promotes oligomeric CAV1 targeting to lysosomes for degradation. Ubiquitinated by ZNRF1; leading to degradation and modulation of the TLR4-mediated immune response.</text>
</comment>
<comment type="similarity">
    <text evidence="7">Belongs to the caveolin family.</text>
</comment>
<accession>Q2IBC1</accession>
<keyword id="KW-0007">Acetylation</keyword>
<keyword id="KW-1003">Cell membrane</keyword>
<keyword id="KW-0333">Golgi apparatus</keyword>
<keyword id="KW-1017">Isopeptide bond</keyword>
<keyword id="KW-0449">Lipoprotein</keyword>
<keyword id="KW-0472">Membrane</keyword>
<keyword id="KW-0564">Palmitate</keyword>
<keyword id="KW-0597">Phosphoprotein</keyword>
<keyword id="KW-1185">Reference proteome</keyword>
<keyword id="KW-0832">Ubl conjugation</keyword>
<evidence type="ECO:0000250" key="1"/>
<evidence type="ECO:0000250" key="2">
    <source>
        <dbReference type="UniProtKB" id="P41350"/>
    </source>
</evidence>
<evidence type="ECO:0000250" key="3">
    <source>
        <dbReference type="UniProtKB" id="P49817"/>
    </source>
</evidence>
<evidence type="ECO:0000250" key="4">
    <source>
        <dbReference type="UniProtKB" id="Q03135"/>
    </source>
</evidence>
<evidence type="ECO:0000250" key="5">
    <source>
        <dbReference type="UniProtKB" id="Q2IBA5"/>
    </source>
</evidence>
<evidence type="ECO:0000255" key="6"/>
<evidence type="ECO:0000305" key="7"/>
<name>CAV1_RHIFE</name>
<gene>
    <name type="primary">CAV1</name>
</gene>
<feature type="initiator methionine" description="Removed" evidence="4">
    <location>
        <position position="1"/>
    </location>
</feature>
<feature type="chain" id="PRO_0000251905" description="Caveolin-1">
    <location>
        <begin position="2"/>
        <end position="178"/>
    </location>
</feature>
<feature type="topological domain" description="Cytoplasmic" evidence="6">
    <location>
        <begin position="2"/>
        <end position="104"/>
    </location>
</feature>
<feature type="intramembrane region" description="Helical" evidence="6">
    <location>
        <begin position="105"/>
        <end position="125"/>
    </location>
</feature>
<feature type="topological domain" description="Cytoplasmic" evidence="6">
    <location>
        <begin position="126"/>
        <end position="178"/>
    </location>
</feature>
<feature type="region of interest" description="Required for homooligomerization" evidence="4">
    <location>
        <begin position="2"/>
        <end position="94"/>
    </location>
</feature>
<feature type="region of interest" description="Interaction with CAVIN3" evidence="4">
    <location>
        <begin position="82"/>
        <end position="94"/>
    </location>
</feature>
<feature type="region of interest" description="Interacts with SPRY1, SPRY2, SPRY3 and SPRY4" evidence="3">
    <location>
        <begin position="131"/>
        <end position="142"/>
    </location>
</feature>
<feature type="region of interest" description="Interacts with SPRY1, SPRY2, and SPRY4" evidence="3">
    <location>
        <begin position="149"/>
        <end position="160"/>
    </location>
</feature>
<feature type="region of interest" description="Interacts with SPRY1, SPRY2, SPRY3 and SPRY4" evidence="3">
    <location>
        <begin position="167"/>
        <end position="178"/>
    </location>
</feature>
<feature type="modified residue" description="N-acetylserine" evidence="4">
    <location>
        <position position="2"/>
    </location>
</feature>
<feature type="modified residue" description="Phosphoserine" evidence="2">
    <location>
        <position position="2"/>
    </location>
</feature>
<feature type="modified residue" description="N6-acetyllysine; alternate" evidence="4">
    <location>
        <position position="5"/>
    </location>
</feature>
<feature type="modified residue" description="Phosphotyrosine" evidence="4">
    <location>
        <position position="6"/>
    </location>
</feature>
<feature type="modified residue" description="Phosphoserine" evidence="3">
    <location>
        <position position="9"/>
    </location>
</feature>
<feature type="modified residue" description="Phosphotyrosine; by ABL1" evidence="3">
    <location>
        <position position="14"/>
    </location>
</feature>
<feature type="modified residue" description="Phosphotyrosine" evidence="4">
    <location>
        <position position="25"/>
    </location>
</feature>
<feature type="lipid moiety-binding region" description="S-palmitoyl cysteine" evidence="1">
    <location>
        <position position="143"/>
    </location>
</feature>
<feature type="lipid moiety-binding region" description="S-palmitoyl cysteine" evidence="1">
    <location>
        <position position="156"/>
    </location>
</feature>
<feature type="cross-link" description="Glycyl lysine isopeptide (Lys-Gly) (interchain with G-Cter in ubiquitin); alternate" evidence="4">
    <location>
        <position position="5"/>
    </location>
</feature>
<feature type="cross-link" description="Glycyl lysine isopeptide (Lys-Gly) (interchain with G-Cter in ubiquitin)" evidence="4">
    <location>
        <position position="26"/>
    </location>
</feature>
<feature type="cross-link" description="Glycyl lysine isopeptide (Lys-Gly) (interchain with G-Cter in ubiquitin)" evidence="4">
    <location>
        <position position="30"/>
    </location>
</feature>
<feature type="cross-link" description="Glycyl lysine isopeptide (Lys-Gly) (interchain with G-Cter in ubiquitin)" evidence="4">
    <location>
        <position position="39"/>
    </location>
</feature>
<feature type="cross-link" description="Glycyl lysine isopeptide (Lys-Gly) (interchain with G-Cter in ubiquitin)" evidence="4">
    <location>
        <position position="47"/>
    </location>
</feature>
<feature type="cross-link" description="Glycyl lysine isopeptide (Lys-Gly) (interchain with G-Cter in ubiquitin)" evidence="4">
    <location>
        <position position="57"/>
    </location>
</feature>